<protein>
    <recommendedName>
        <fullName>Pyruvate, phosphate dikinase, chloroplastic</fullName>
        <ecNumber evidence="2">2.7.9.1</ecNumber>
    </recommendedName>
    <alternativeName>
        <fullName>Pyruvate, orthophosphate dikinase</fullName>
    </alternativeName>
</protein>
<proteinExistence type="evidence at transcript level"/>
<comment type="function">
    <text>Formation of phosphoenolpyruvate, which is the primary acceptor of CO(2) in C4 and some Crassulacean acid metabolism plants.</text>
</comment>
<comment type="catalytic activity">
    <reaction>
        <text>pyruvate + phosphate + ATP = phosphoenolpyruvate + AMP + diphosphate + H(+)</text>
        <dbReference type="Rhea" id="RHEA:10756"/>
        <dbReference type="ChEBI" id="CHEBI:15361"/>
        <dbReference type="ChEBI" id="CHEBI:15378"/>
        <dbReference type="ChEBI" id="CHEBI:30616"/>
        <dbReference type="ChEBI" id="CHEBI:33019"/>
        <dbReference type="ChEBI" id="CHEBI:43474"/>
        <dbReference type="ChEBI" id="CHEBI:58702"/>
        <dbReference type="ChEBI" id="CHEBI:456215"/>
        <dbReference type="EC" id="2.7.9.1"/>
    </reaction>
</comment>
<comment type="cofactor">
    <cofactor evidence="2">
        <name>Mg(2+)</name>
        <dbReference type="ChEBI" id="CHEBI:18420"/>
    </cofactor>
</comment>
<comment type="activity regulation">
    <text evidence="1">Activated by light-induced dephosphorylation. Inhibited by dark-induced phosphorylation. Both reactions are catalyzed by PDRP1 (By similarity).</text>
</comment>
<comment type="subunit">
    <text evidence="1">Homodimer.</text>
</comment>
<comment type="subcellular location">
    <subcellularLocation>
        <location>Plastid</location>
        <location>Chloroplast</location>
    </subcellularLocation>
</comment>
<comment type="domain">
    <text evidence="1">The N-terminal domain contains the ATP/Pi binding site, the central domain the pyrophosphate/phosphate carrier histidine, and the C-terminal domain the pyruvate binding site.</text>
</comment>
<comment type="PTM">
    <text evidence="1">Phosphorylation of Thr-530 in the dark inactivates the enzyme. Dephosphorylation upon light stimulation reactivates the enzyme (By similarity).</text>
</comment>
<comment type="miscellaneous">
    <text evidence="1">The reaction takes place in three steps, mediated by a phosphocarrier histidine residue located on the surface of the central domain. The two first partial reactions are catalyzed at an active site located on the N-terminal domain, and the third partial reaction is catalyzed at an active site located on the C-terminal domain. For catalytic turnover, the central domain swivels from the concave surface of the N-terminal domain to that of the C-terminal domain (By similarity).</text>
</comment>
<comment type="similarity">
    <text evidence="3">Belongs to the PEP-utilizing enzyme family.</text>
</comment>
<gene>
    <name type="primary">PPD</name>
    <name type="synonym">PPDK</name>
</gene>
<dbReference type="EC" id="2.7.9.1" evidence="2"/>
<dbReference type="EMBL" id="X78347">
    <property type="protein sequence ID" value="CAA55143.1"/>
    <property type="molecule type" value="mRNA"/>
</dbReference>
<dbReference type="EMBL" id="X82489">
    <property type="protein sequence ID" value="CAA57872.1"/>
    <property type="molecule type" value="Genomic_DNA"/>
</dbReference>
<dbReference type="PIR" id="S55478">
    <property type="entry name" value="S55478"/>
</dbReference>
<dbReference type="SMR" id="Q42910"/>
<dbReference type="GO" id="GO:0009507">
    <property type="term" value="C:chloroplast"/>
    <property type="evidence" value="ECO:0007669"/>
    <property type="project" value="UniProtKB-SubCell"/>
</dbReference>
<dbReference type="GO" id="GO:0005524">
    <property type="term" value="F:ATP binding"/>
    <property type="evidence" value="ECO:0007669"/>
    <property type="project" value="UniProtKB-KW"/>
</dbReference>
<dbReference type="GO" id="GO:0016301">
    <property type="term" value="F:kinase activity"/>
    <property type="evidence" value="ECO:0007669"/>
    <property type="project" value="UniProtKB-KW"/>
</dbReference>
<dbReference type="GO" id="GO:0046872">
    <property type="term" value="F:metal ion binding"/>
    <property type="evidence" value="ECO:0007669"/>
    <property type="project" value="UniProtKB-KW"/>
</dbReference>
<dbReference type="GO" id="GO:0050242">
    <property type="term" value="F:pyruvate, phosphate dikinase activity"/>
    <property type="evidence" value="ECO:0007669"/>
    <property type="project" value="UniProtKB-EC"/>
</dbReference>
<dbReference type="GO" id="GO:0015979">
    <property type="term" value="P:photosynthesis"/>
    <property type="evidence" value="ECO:0007669"/>
    <property type="project" value="UniProtKB-KW"/>
</dbReference>
<dbReference type="FunFam" id="3.20.20.60:FF:000040">
    <property type="entry name" value="Pyruvate, phosphate dikinase, chloroplastic"/>
    <property type="match status" value="1"/>
</dbReference>
<dbReference type="FunFam" id="3.30.470.20:FF:000038">
    <property type="entry name" value="Pyruvate, phosphate dikinase, chloroplastic"/>
    <property type="match status" value="1"/>
</dbReference>
<dbReference type="FunFam" id="3.50.30.10:FF:000009">
    <property type="entry name" value="Pyruvate, phosphate dikinase, chloroplastic"/>
    <property type="match status" value="1"/>
</dbReference>
<dbReference type="Gene3D" id="1.20.80.30">
    <property type="match status" value="1"/>
</dbReference>
<dbReference type="Gene3D" id="3.30.1490.20">
    <property type="entry name" value="ATP-grasp fold, A domain"/>
    <property type="match status" value="1"/>
</dbReference>
<dbReference type="Gene3D" id="3.30.470.20">
    <property type="entry name" value="ATP-grasp fold, B domain"/>
    <property type="match status" value="1"/>
</dbReference>
<dbReference type="Gene3D" id="3.20.20.60">
    <property type="entry name" value="Phosphoenolpyruvate-binding domains"/>
    <property type="match status" value="1"/>
</dbReference>
<dbReference type="Gene3D" id="3.50.30.10">
    <property type="entry name" value="Phosphohistidine domain"/>
    <property type="match status" value="1"/>
</dbReference>
<dbReference type="Gene3D" id="1.10.189.10">
    <property type="entry name" value="Pyruvate Phosphate Dikinase, domain 2"/>
    <property type="match status" value="1"/>
</dbReference>
<dbReference type="InterPro" id="IPR013815">
    <property type="entry name" value="ATP_grasp_subdomain_1"/>
</dbReference>
<dbReference type="InterPro" id="IPR008279">
    <property type="entry name" value="PEP-util_enz_mobile_dom"/>
</dbReference>
<dbReference type="InterPro" id="IPR018274">
    <property type="entry name" value="PEP_util_AS"/>
</dbReference>
<dbReference type="InterPro" id="IPR000121">
    <property type="entry name" value="PEP_util_C"/>
</dbReference>
<dbReference type="InterPro" id="IPR023151">
    <property type="entry name" value="PEP_util_CS"/>
</dbReference>
<dbReference type="InterPro" id="IPR036637">
    <property type="entry name" value="Phosphohistidine_dom_sf"/>
</dbReference>
<dbReference type="InterPro" id="IPR002192">
    <property type="entry name" value="PPDK_AMP/ATP-bd"/>
</dbReference>
<dbReference type="InterPro" id="IPR010121">
    <property type="entry name" value="Pyruvate_phosphate_dikinase"/>
</dbReference>
<dbReference type="InterPro" id="IPR015813">
    <property type="entry name" value="Pyrv/PenolPyrv_kinase-like_dom"/>
</dbReference>
<dbReference type="InterPro" id="IPR040442">
    <property type="entry name" value="Pyrv_kinase-like_dom_sf"/>
</dbReference>
<dbReference type="NCBIfam" id="NF004531">
    <property type="entry name" value="PRK05878.1"/>
    <property type="match status" value="1"/>
</dbReference>
<dbReference type="NCBIfam" id="TIGR01828">
    <property type="entry name" value="pyru_phos_dikin"/>
    <property type="match status" value="1"/>
</dbReference>
<dbReference type="PANTHER" id="PTHR22931">
    <property type="entry name" value="PHOSPHOENOLPYRUVATE DIKINASE-RELATED"/>
    <property type="match status" value="1"/>
</dbReference>
<dbReference type="PANTHER" id="PTHR22931:SF9">
    <property type="entry name" value="PYRUVATE, PHOSPHATE DIKINASE 1, CHLOROPLASTIC"/>
    <property type="match status" value="1"/>
</dbReference>
<dbReference type="Pfam" id="PF00391">
    <property type="entry name" value="PEP-utilizers"/>
    <property type="match status" value="1"/>
</dbReference>
<dbReference type="Pfam" id="PF02896">
    <property type="entry name" value="PEP-utilizers_C"/>
    <property type="match status" value="1"/>
</dbReference>
<dbReference type="Pfam" id="PF01326">
    <property type="entry name" value="PPDK_N"/>
    <property type="match status" value="2"/>
</dbReference>
<dbReference type="PIRSF" id="PIRSF000853">
    <property type="entry name" value="PPDK"/>
    <property type="match status" value="1"/>
</dbReference>
<dbReference type="SUPFAM" id="SSF56059">
    <property type="entry name" value="Glutathione synthetase ATP-binding domain-like"/>
    <property type="match status" value="1"/>
</dbReference>
<dbReference type="SUPFAM" id="SSF51621">
    <property type="entry name" value="Phosphoenolpyruvate/pyruvate domain"/>
    <property type="match status" value="1"/>
</dbReference>
<dbReference type="SUPFAM" id="SSF52009">
    <property type="entry name" value="Phosphohistidine domain"/>
    <property type="match status" value="1"/>
</dbReference>
<dbReference type="PROSITE" id="PS00742">
    <property type="entry name" value="PEP_ENZYMES_2"/>
    <property type="match status" value="1"/>
</dbReference>
<dbReference type="PROSITE" id="PS00370">
    <property type="entry name" value="PEP_ENZYMES_PHOS_SITE"/>
    <property type="match status" value="1"/>
</dbReference>
<sequence>MASAFKGILIRSPPDVCAETVAKVSQCNRAQLVKNSSTGFKNIFKLSEARKFHAPVASHLRSQAVMAPASDPTSTAIKRVFTFGKGRSEGNKGMKSLLGGKGANLAEMASIGLSVPPGLTISTEACQEYQEHGKQLSAGLWEEILEGLRVIEKDMGSYLGDPSKPLLLSVRSGAAISMPGMMDTVLNLGLNDDVVAGLAAKSGERFAYDSYRRFLDMFGNVVMGISHSSFEEKLEKLKQAKGVKLDTELTASDLKEVVEQYKNVYLEVKGEKFPADPERQLQLAIQAVFDSWDSPRAIKYRNINQITGLKGTAVNIQCMVFGNMGNTSGTGVLFTRNPSTGEKKLYGEFLINAQGEDVVAGIRTPEDLDTMRSCMPEAYKELVENCEILERHYKDMMDIEFTVQENRLWMLQCRSGKRTGKGAVKIAVDLVKEGIVDTYTAIKMVEPQHLDQLLHPQFEDPSAYKDRVIATGLPASPGAAVGQIIFSADEAESWQAQGKSVILVRNETSPEDVGGMHAAIGILTARGGMTSHAAVVAGGWGKCCVSGCSEIRVNDTDKVLLVGDKVISEGDWLSLNGSTGEVILGKVPLSPPALSGDLETFMSWADDIRVLKVMANADTPEDALAARNNGAEGIGLCRTEHMFFASDDRIKTVRKMIMAVTSEQRKVALDQLLPYQRSDFEGIFRAMDGLPVTIRLLDPPLHEFLPEGDVEQIVSELTLETGMAEDEIFSRIEKLSEVNPMLGFRGCRLGISYPELTEMQARAIFQAAVSMSNQGVKVFPEIMVPLVGTPQELGHQVSLIRNVAEKVFSETGSSLSYKVGTMIEIPRAALVADEIAMEAEFFSFGTNDLTQMTFGYSRDDVGKFLPVYLSKGILQSDPFEVLDQKGVGQLIKLATEKGRSARPSLKVGICGEHGGEPSSVAFFAEAGLDYVSCSPFRVPIARLAAAQVV</sequence>
<reference key="1">
    <citation type="journal article" date="1995" name="Planta">
        <title>Age-dependent induction of pyruvate, orthophosphate dikinase in Mesembryanthemum crystallinum L.</title>
        <authorList>
            <person name="Fisslthaler B."/>
            <person name="Meyer G."/>
            <person name="Bohnert H.J."/>
            <person name="Schmitt J.M."/>
        </authorList>
    </citation>
    <scope>NUCLEOTIDE SEQUENCE [MRNA]</scope>
    <source>
        <tissue>Leaf</tissue>
    </source>
</reference>
<reference key="2">
    <citation type="online journal article" date="1996" name="Plant Gene Register">
        <title>The gene encoding pyruvate, orthophosphate dikinase from Mesembryanthemum crystallinum L. has a long intron in the 5' untranslated region.</title>
        <authorList>
            <person name="Fisslthaler B."/>
            <person name="Meyer G."/>
            <person name="Schmitt J.M."/>
        </authorList>
        <locator>PGR96-010</locator>
    </citation>
    <scope>NUCLEOTIDE SEQUENCE</scope>
</reference>
<organism>
    <name type="scientific">Mesembryanthemum crystallinum</name>
    <name type="common">Common ice plant</name>
    <name type="synonym">Cryophytum crystallinum</name>
    <dbReference type="NCBI Taxonomy" id="3544"/>
    <lineage>
        <taxon>Eukaryota</taxon>
        <taxon>Viridiplantae</taxon>
        <taxon>Streptophyta</taxon>
        <taxon>Embryophyta</taxon>
        <taxon>Tracheophyta</taxon>
        <taxon>Spermatophyta</taxon>
        <taxon>Magnoliopsida</taxon>
        <taxon>eudicotyledons</taxon>
        <taxon>Gunneridae</taxon>
        <taxon>Pentapetalae</taxon>
        <taxon>Caryophyllales</taxon>
        <taxon>Aizoaceae</taxon>
        <taxon>Mesembryanthemum</taxon>
        <taxon>Mesembryanthemum subgen. Cryophytum</taxon>
    </lineage>
</organism>
<accession>Q42910</accession>
<accession>Q42911</accession>
<evidence type="ECO:0000250" key="1"/>
<evidence type="ECO:0000250" key="2">
    <source>
        <dbReference type="UniProtKB" id="P11155"/>
    </source>
</evidence>
<evidence type="ECO:0000305" key="3"/>
<feature type="transit peptide" description="Chloroplast" evidence="1">
    <location>
        <begin position="1"/>
        <end position="74"/>
    </location>
</feature>
<feature type="chain" id="PRO_0000023564" description="Pyruvate, phosphate dikinase, chloroplastic">
    <location>
        <begin position="75"/>
        <end position="949"/>
    </location>
</feature>
<feature type="active site" description="Tele-phosphohistidine intermediate" evidence="2">
    <location>
        <position position="532"/>
    </location>
</feature>
<feature type="active site" description="Proton donor" evidence="2">
    <location>
        <position position="910"/>
    </location>
</feature>
<feature type="binding site" evidence="2">
    <location>
        <position position="638"/>
    </location>
    <ligand>
        <name>substrate</name>
    </ligand>
</feature>
<feature type="binding site" evidence="2">
    <location>
        <position position="695"/>
    </location>
    <ligand>
        <name>substrate</name>
    </ligand>
</feature>
<feature type="binding site" evidence="2">
    <location>
        <position position="824"/>
    </location>
    <ligand>
        <name>Mg(2+)</name>
        <dbReference type="ChEBI" id="CHEBI:18420"/>
    </ligand>
</feature>
<feature type="binding site" evidence="2">
    <location>
        <position position="824"/>
    </location>
    <ligand>
        <name>substrate</name>
    </ligand>
</feature>
<feature type="binding site" evidence="2">
    <location>
        <position position="845"/>
    </location>
    <ligand>
        <name>substrate</name>
    </ligand>
</feature>
<feature type="binding site" evidence="2">
    <location>
        <position position="846"/>
    </location>
    <ligand>
        <name>substrate</name>
    </ligand>
</feature>
<feature type="binding site" evidence="2">
    <location>
        <position position="847"/>
    </location>
    <ligand>
        <name>substrate</name>
    </ligand>
</feature>
<feature type="binding site" evidence="2">
    <location>
        <position position="848"/>
    </location>
    <ligand>
        <name>Mg(2+)</name>
        <dbReference type="ChEBI" id="CHEBI:18420"/>
    </ligand>
</feature>
<feature type="binding site" evidence="2">
    <location>
        <position position="848"/>
    </location>
    <ligand>
        <name>substrate</name>
    </ligand>
</feature>
<feature type="modified residue" description="Phosphothreonine; by PDRP1" evidence="1">
    <location>
        <position position="530"/>
    </location>
</feature>
<feature type="sequence conflict" description="In Ref. 1; CAA55143." evidence="3" ref="1">
    <original>A</original>
    <variation>V</variation>
    <location>
        <position position="240"/>
    </location>
</feature>
<feature type="sequence conflict" description="In Ref. 1; CAA55143." evidence="3" ref="1">
    <original>VILGKVPL</original>
    <variation>SYLRESTT</variation>
    <location>
        <begin position="582"/>
        <end position="589"/>
    </location>
</feature>
<name>PPDK_MESCR</name>
<keyword id="KW-0067">ATP-binding</keyword>
<keyword id="KW-0150">Chloroplast</keyword>
<keyword id="KW-0418">Kinase</keyword>
<keyword id="KW-0460">Magnesium</keyword>
<keyword id="KW-0479">Metal-binding</keyword>
<keyword id="KW-0547">Nucleotide-binding</keyword>
<keyword id="KW-0597">Phosphoprotein</keyword>
<keyword id="KW-0602">Photosynthesis</keyword>
<keyword id="KW-0934">Plastid</keyword>
<keyword id="KW-0808">Transferase</keyword>
<keyword id="KW-0809">Transit peptide</keyword>